<dbReference type="EC" id="2.7.7.12" evidence="1"/>
<dbReference type="EMBL" id="M33681">
    <property type="protein sequence ID" value="AAA27112.1"/>
    <property type="molecule type" value="Genomic_DNA"/>
</dbReference>
<dbReference type="EMBL" id="AE006468">
    <property type="protein sequence ID" value="AAL19713.1"/>
    <property type="molecule type" value="Genomic_DNA"/>
</dbReference>
<dbReference type="PIR" id="B37760">
    <property type="entry name" value="B37760"/>
</dbReference>
<dbReference type="RefSeq" id="NP_459754.1">
    <property type="nucleotide sequence ID" value="NC_003197.2"/>
</dbReference>
<dbReference type="RefSeq" id="WP_000187473.1">
    <property type="nucleotide sequence ID" value="NC_003197.2"/>
</dbReference>
<dbReference type="SMR" id="P22714"/>
<dbReference type="STRING" id="99287.STM0775"/>
<dbReference type="PaxDb" id="99287-STM0775"/>
<dbReference type="GeneID" id="1252295"/>
<dbReference type="KEGG" id="stm:STM0775"/>
<dbReference type="PATRIC" id="fig|99287.12.peg.808"/>
<dbReference type="HOGENOM" id="CLU_029960_0_0_6"/>
<dbReference type="OMA" id="CFENRGA"/>
<dbReference type="PhylomeDB" id="P22714"/>
<dbReference type="BioCyc" id="SENT99287:STM0775-MONOMER"/>
<dbReference type="UniPathway" id="UPA00214"/>
<dbReference type="Proteomes" id="UP000001014">
    <property type="component" value="Chromosome"/>
</dbReference>
<dbReference type="GO" id="GO:0005737">
    <property type="term" value="C:cytoplasm"/>
    <property type="evidence" value="ECO:0000318"/>
    <property type="project" value="GO_Central"/>
</dbReference>
<dbReference type="GO" id="GO:0008108">
    <property type="term" value="F:UDP-glucose:hexose-1-phosphate uridylyltransferase activity"/>
    <property type="evidence" value="ECO:0000318"/>
    <property type="project" value="GO_Central"/>
</dbReference>
<dbReference type="GO" id="GO:0008270">
    <property type="term" value="F:zinc ion binding"/>
    <property type="evidence" value="ECO:0007669"/>
    <property type="project" value="InterPro"/>
</dbReference>
<dbReference type="GO" id="GO:0033499">
    <property type="term" value="P:galactose catabolic process via UDP-galactose, Leloir pathway"/>
    <property type="evidence" value="ECO:0000318"/>
    <property type="project" value="GO_Central"/>
</dbReference>
<dbReference type="CDD" id="cd00608">
    <property type="entry name" value="GalT"/>
    <property type="match status" value="1"/>
</dbReference>
<dbReference type="FunFam" id="3.30.428.10:FF:000001">
    <property type="entry name" value="Galactose-1-phosphate uridylyltransferase"/>
    <property type="match status" value="1"/>
</dbReference>
<dbReference type="FunFam" id="3.30.428.10:FF:000002">
    <property type="entry name" value="Galactose-1-phosphate uridylyltransferase"/>
    <property type="match status" value="1"/>
</dbReference>
<dbReference type="Gene3D" id="3.30.428.10">
    <property type="entry name" value="HIT-like"/>
    <property type="match status" value="2"/>
</dbReference>
<dbReference type="InterPro" id="IPR001937">
    <property type="entry name" value="GalP_UDPtransf1"/>
</dbReference>
<dbReference type="InterPro" id="IPR019779">
    <property type="entry name" value="GalP_UDPtransf1_His-AS"/>
</dbReference>
<dbReference type="InterPro" id="IPR005850">
    <property type="entry name" value="GalP_Utransf_C"/>
</dbReference>
<dbReference type="InterPro" id="IPR005849">
    <property type="entry name" value="GalP_Utransf_N"/>
</dbReference>
<dbReference type="InterPro" id="IPR036265">
    <property type="entry name" value="HIT-like_sf"/>
</dbReference>
<dbReference type="NCBIfam" id="TIGR00209">
    <property type="entry name" value="galT_1"/>
    <property type="match status" value="1"/>
</dbReference>
<dbReference type="NCBIfam" id="NF008724">
    <property type="entry name" value="PRK11720.1"/>
    <property type="match status" value="1"/>
</dbReference>
<dbReference type="PANTHER" id="PTHR11943">
    <property type="entry name" value="GALACTOSE-1-PHOSPHATE URIDYLYLTRANSFERASE"/>
    <property type="match status" value="1"/>
</dbReference>
<dbReference type="PANTHER" id="PTHR11943:SF1">
    <property type="entry name" value="GALACTOSE-1-PHOSPHATE URIDYLYLTRANSFERASE"/>
    <property type="match status" value="1"/>
</dbReference>
<dbReference type="Pfam" id="PF02744">
    <property type="entry name" value="GalP_UDP_tr_C"/>
    <property type="match status" value="1"/>
</dbReference>
<dbReference type="Pfam" id="PF01087">
    <property type="entry name" value="GalP_UDP_transf"/>
    <property type="match status" value="1"/>
</dbReference>
<dbReference type="PIRSF" id="PIRSF000808">
    <property type="entry name" value="GalT"/>
    <property type="match status" value="1"/>
</dbReference>
<dbReference type="SUPFAM" id="SSF54197">
    <property type="entry name" value="HIT-like"/>
    <property type="match status" value="2"/>
</dbReference>
<dbReference type="PROSITE" id="PS00117">
    <property type="entry name" value="GAL_P_UDP_TRANSF_I"/>
    <property type="match status" value="1"/>
</dbReference>
<evidence type="ECO:0000250" key="1">
    <source>
        <dbReference type="UniProtKB" id="P09148"/>
    </source>
</evidence>
<evidence type="ECO:0000255" key="2">
    <source>
        <dbReference type="PROSITE-ProRule" id="PRU10033"/>
    </source>
</evidence>
<evidence type="ECO:0000305" key="3"/>
<gene>
    <name type="primary">galT</name>
    <name type="ordered locus">STM0775</name>
</gene>
<organism>
    <name type="scientific">Salmonella typhimurium (strain LT2 / SGSC1412 / ATCC 700720)</name>
    <dbReference type="NCBI Taxonomy" id="99287"/>
    <lineage>
        <taxon>Bacteria</taxon>
        <taxon>Pseudomonadati</taxon>
        <taxon>Pseudomonadota</taxon>
        <taxon>Gammaproteobacteria</taxon>
        <taxon>Enterobacterales</taxon>
        <taxon>Enterobacteriaceae</taxon>
        <taxon>Salmonella</taxon>
    </lineage>
</organism>
<protein>
    <recommendedName>
        <fullName>Galactose-1-phosphate uridylyltransferase</fullName>
        <shortName>Gal-1-P uridylyltransferase</shortName>
        <ecNumber evidence="1">2.7.7.12</ecNumber>
    </recommendedName>
    <alternativeName>
        <fullName>UDP-glucose--hexose-1-phosphate uridylyltransferase</fullName>
    </alternativeName>
</protein>
<proteinExistence type="inferred from homology"/>
<sequence>MTPFNPIDHPHRRYNPLTGQWVLVSPHRAKRPWQGAQETPSQQMLPAHDPDCFLCAGNTRVTGDKNPDYKGTYVFTNDFAALMADTPDAPDSHDPLMRCQSARGTSRVICFSPDHSKTLPELSLPALTEIVRTWQTQTAELGKTYPWVQVFENKGAAMGCSNPHPHGQVWANSFLPNEAEREDRLQKAYFAEQRSPMLVDYVQRELADGSRTVVETEHWLAVVPYWAAWPFETLLLPKTHVLRITDLSDEQRDSLALALKKLTSRYDNLFQCSFPYSMGWHGAPFNGEENAHWQLHAHFYPPLLRSATVRKFMVGYEMLAETQRDLTAEQAAERLRAVSDIHFRESGV</sequence>
<comment type="catalytic activity">
    <reaction evidence="1">
        <text>alpha-D-galactose 1-phosphate + UDP-alpha-D-glucose = alpha-D-glucose 1-phosphate + UDP-alpha-D-galactose</text>
        <dbReference type="Rhea" id="RHEA:13989"/>
        <dbReference type="ChEBI" id="CHEBI:58336"/>
        <dbReference type="ChEBI" id="CHEBI:58601"/>
        <dbReference type="ChEBI" id="CHEBI:58885"/>
        <dbReference type="ChEBI" id="CHEBI:66914"/>
        <dbReference type="EC" id="2.7.7.12"/>
    </reaction>
</comment>
<comment type="cofactor">
    <cofactor evidence="1">
        <name>Zn(2+)</name>
        <dbReference type="ChEBI" id="CHEBI:29105"/>
    </cofactor>
    <text evidence="1">Binds 1 zinc ion per subunit. Zinc binding seems to play a structural role.</text>
</comment>
<comment type="pathway">
    <text>Carbohydrate metabolism; galactose metabolism.</text>
</comment>
<comment type="similarity">
    <text evidence="3">Belongs to the galactose-1-phosphate uridylyltransferase type 1 family.</text>
</comment>
<accession>P22714</accession>
<feature type="chain" id="PRO_0000169896" description="Galactose-1-phosphate uridylyltransferase">
    <location>
        <begin position="1"/>
        <end position="348"/>
    </location>
</feature>
<feature type="active site" description="Tele-UMP-histidine intermediate" evidence="2">
    <location>
        <position position="166"/>
    </location>
</feature>
<feature type="binding site" evidence="1">
    <location>
        <begin position="28"/>
        <end position="31"/>
    </location>
    <ligand>
        <name>UDP-alpha-D-glucose</name>
        <dbReference type="ChEBI" id="CHEBI:58885"/>
        <note>ligand shared between dimeric partners</note>
    </ligand>
</feature>
<feature type="binding site" evidence="2">
    <location>
        <position position="52"/>
    </location>
    <ligand>
        <name>Zn(2+)</name>
        <dbReference type="ChEBI" id="CHEBI:29105"/>
    </ligand>
</feature>
<feature type="binding site" evidence="2">
    <location>
        <position position="55"/>
    </location>
    <ligand>
        <name>Zn(2+)</name>
        <dbReference type="ChEBI" id="CHEBI:29105"/>
    </ligand>
</feature>
<feature type="binding site" description="in other chain" evidence="1">
    <location>
        <position position="61"/>
    </location>
    <ligand>
        <name>UDP-alpha-D-glucose</name>
        <dbReference type="ChEBI" id="CHEBI:58885"/>
        <note>ligand shared between dimeric partners</note>
    </ligand>
</feature>
<feature type="binding site" description="in other chain" evidence="1">
    <location>
        <begin position="77"/>
        <end position="78"/>
    </location>
    <ligand>
        <name>UDP-alpha-D-glucose</name>
        <dbReference type="ChEBI" id="CHEBI:58885"/>
        <note>ligand shared between dimeric partners</note>
    </ligand>
</feature>
<feature type="binding site" evidence="2">
    <location>
        <position position="115"/>
    </location>
    <ligand>
        <name>Zn(2+)</name>
        <dbReference type="ChEBI" id="CHEBI:29105"/>
    </ligand>
</feature>
<feature type="binding site" description="in other chain" evidence="1">
    <location>
        <position position="153"/>
    </location>
    <ligand>
        <name>UDP-alpha-D-glucose</name>
        <dbReference type="ChEBI" id="CHEBI:58885"/>
        <note>ligand shared between dimeric partners</note>
    </ligand>
</feature>
<feature type="binding site" description="in other chain" evidence="1">
    <location>
        <begin position="159"/>
        <end position="161"/>
    </location>
    <ligand>
        <name>UDP-alpha-D-glucose</name>
        <dbReference type="ChEBI" id="CHEBI:58885"/>
        <note>ligand shared between dimeric partners</note>
    </ligand>
</feature>
<feature type="binding site" evidence="2">
    <location>
        <position position="164"/>
    </location>
    <ligand>
        <name>Zn(2+)</name>
        <dbReference type="ChEBI" id="CHEBI:29105"/>
    </ligand>
</feature>
<feature type="binding site" description="in other chain" evidence="1">
    <location>
        <position position="168"/>
    </location>
    <ligand>
        <name>UDP-alpha-D-glucose</name>
        <dbReference type="ChEBI" id="CHEBI:58885"/>
        <note>ligand shared between dimeric partners</note>
    </ligand>
</feature>
<feature type="binding site" evidence="1">
    <location>
        <position position="182"/>
    </location>
    <ligand>
        <name>Fe cation</name>
        <dbReference type="ChEBI" id="CHEBI:24875"/>
    </ligand>
</feature>
<feature type="binding site" evidence="1">
    <location>
        <position position="281"/>
    </location>
    <ligand>
        <name>Fe cation</name>
        <dbReference type="ChEBI" id="CHEBI:24875"/>
    </ligand>
</feature>
<feature type="binding site" evidence="1">
    <location>
        <position position="296"/>
    </location>
    <ligand>
        <name>Fe cation</name>
        <dbReference type="ChEBI" id="CHEBI:24875"/>
    </ligand>
</feature>
<feature type="binding site" evidence="1">
    <location>
        <position position="298"/>
    </location>
    <ligand>
        <name>Fe cation</name>
        <dbReference type="ChEBI" id="CHEBI:24875"/>
    </ligand>
</feature>
<feature type="binding site" evidence="1">
    <location>
        <begin position="311"/>
        <end position="312"/>
    </location>
    <ligand>
        <name>UDP-alpha-D-glucose</name>
        <dbReference type="ChEBI" id="CHEBI:58885"/>
        <note>ligand shared between dimeric partners</note>
    </ligand>
</feature>
<feature type="binding site" evidence="1">
    <location>
        <begin position="316"/>
        <end position="317"/>
    </location>
    <ligand>
        <name>UDP-alpha-D-glucose</name>
        <dbReference type="ChEBI" id="CHEBI:58885"/>
        <note>ligand shared between dimeric partners</note>
    </ligand>
</feature>
<feature type="binding site" description="in other chain" evidence="1">
    <location>
        <position position="323"/>
    </location>
    <ligand>
        <name>UDP-alpha-D-glucose</name>
        <dbReference type="ChEBI" id="CHEBI:58885"/>
        <note>ligand shared between dimeric partners</note>
    </ligand>
</feature>
<feature type="sequence conflict" description="In Ref. 1; AAA27112." evidence="3" ref="1">
    <location>
        <position position="31"/>
    </location>
</feature>
<feature type="sequence conflict" description="In Ref. 1." evidence="3" ref="1">
    <original>E</original>
    <variation>AE</variation>
    <location>
        <position position="180"/>
    </location>
</feature>
<reference key="1">
    <citation type="journal article" date="1990" name="J. Bacteriol.">
        <title>Molecular cloning and physical and functional characterization of the Salmonella typhimurium and Salmonella typhi galactose utilization operons.</title>
        <authorList>
            <person name="Houng H.S.H."/>
            <person name="Kopecko D.J."/>
            <person name="Baron L.S."/>
        </authorList>
    </citation>
    <scope>NUCLEOTIDE SEQUENCE [GENOMIC DNA]</scope>
</reference>
<reference key="2">
    <citation type="journal article" date="2001" name="Nature">
        <title>Complete genome sequence of Salmonella enterica serovar Typhimurium LT2.</title>
        <authorList>
            <person name="McClelland M."/>
            <person name="Sanderson K.E."/>
            <person name="Spieth J."/>
            <person name="Clifton S.W."/>
            <person name="Latreille P."/>
            <person name="Courtney L."/>
            <person name="Porwollik S."/>
            <person name="Ali J."/>
            <person name="Dante M."/>
            <person name="Du F."/>
            <person name="Hou S."/>
            <person name="Layman D."/>
            <person name="Leonard S."/>
            <person name="Nguyen C."/>
            <person name="Scott K."/>
            <person name="Holmes A."/>
            <person name="Grewal N."/>
            <person name="Mulvaney E."/>
            <person name="Ryan E."/>
            <person name="Sun H."/>
            <person name="Florea L."/>
            <person name="Miller W."/>
            <person name="Stoneking T."/>
            <person name="Nhan M."/>
            <person name="Waterston R."/>
            <person name="Wilson R.K."/>
        </authorList>
    </citation>
    <scope>NUCLEOTIDE SEQUENCE [LARGE SCALE GENOMIC DNA]</scope>
    <source>
        <strain>LT2 / SGSC1412 / ATCC 700720</strain>
    </source>
</reference>
<name>GAL7_SALTY</name>
<keyword id="KW-0119">Carbohydrate metabolism</keyword>
<keyword id="KW-0299">Galactose metabolism</keyword>
<keyword id="KW-0408">Iron</keyword>
<keyword id="KW-0479">Metal-binding</keyword>
<keyword id="KW-0548">Nucleotidyltransferase</keyword>
<keyword id="KW-1185">Reference proteome</keyword>
<keyword id="KW-0808">Transferase</keyword>
<keyword id="KW-0862">Zinc</keyword>